<keyword id="KW-1185">Reference proteome</keyword>
<reference key="1">
    <citation type="journal article" date="1990" name="Mol. Microbiol.">
        <title>Spore colour in Streptomyces coelicolor A3(2) involves the developmentally regulated synthesis of a compound biosynthetically related to polyketide antibiotics.</title>
        <authorList>
            <person name="Davis N.K."/>
            <person name="Chater K.F."/>
            <person name="Bruton C.J."/>
        </authorList>
    </citation>
    <scope>NUCLEOTIDE SEQUENCE [GENOMIC DNA]</scope>
    <source>
        <strain>A3(2) / NRRL B-16638</strain>
    </source>
</reference>
<reference key="2">
    <citation type="journal article" date="2002" name="Nature">
        <title>Complete genome sequence of the model actinomycete Streptomyces coelicolor A3(2).</title>
        <authorList>
            <person name="Bentley S.D."/>
            <person name="Chater K.F."/>
            <person name="Cerdeno-Tarraga A.-M."/>
            <person name="Challis G.L."/>
            <person name="Thomson N.R."/>
            <person name="James K.D."/>
            <person name="Harris D.E."/>
            <person name="Quail M.A."/>
            <person name="Kieser H."/>
            <person name="Harper D."/>
            <person name="Bateman A."/>
            <person name="Brown S."/>
            <person name="Chandra G."/>
            <person name="Chen C.W."/>
            <person name="Collins M."/>
            <person name="Cronin A."/>
            <person name="Fraser A."/>
            <person name="Goble A."/>
            <person name="Hidalgo J."/>
            <person name="Hornsby T."/>
            <person name="Howarth S."/>
            <person name="Huang C.-H."/>
            <person name="Kieser T."/>
            <person name="Larke L."/>
            <person name="Murphy L.D."/>
            <person name="Oliver K."/>
            <person name="O'Neil S."/>
            <person name="Rabbinowitsch E."/>
            <person name="Rajandream M.A."/>
            <person name="Rutherford K.M."/>
            <person name="Rutter S."/>
            <person name="Seeger K."/>
            <person name="Saunders D."/>
            <person name="Sharp S."/>
            <person name="Squares R."/>
            <person name="Squares S."/>
            <person name="Taylor K."/>
            <person name="Warren T."/>
            <person name="Wietzorrek A."/>
            <person name="Woodward J.R."/>
            <person name="Barrell B.G."/>
            <person name="Parkhill J."/>
            <person name="Hopwood D.A."/>
        </authorList>
    </citation>
    <scope>NUCLEOTIDE SEQUENCE [LARGE SCALE GENOMIC DNA]</scope>
    <source>
        <strain>ATCC BAA-471 / A3(2) / M145</strain>
    </source>
</reference>
<sequence length="111" mass="12407">MHHTLIVARMAPGAAPDIAKVFAESDSGELPHLVGVNRRSLFEFGDGVYLHLIESDEDPAPTIGRLTGHPEFRQVSERLEPYVSAYDPATWRGPKDAMARCFYRWERTPAG</sequence>
<name>YHB2_STRCO</name>
<protein>
    <recommendedName>
        <fullName>Uncharacterized protein SCO5314</fullName>
    </recommendedName>
    <alternativeName>
        <fullName>WhiE ORF VII</fullName>
    </alternativeName>
</protein>
<feature type="chain" id="PRO_0000205353" description="Uncharacterized protein SCO5314">
    <location>
        <begin position="1"/>
        <end position="111"/>
    </location>
</feature>
<gene>
    <name type="ordered locus">SCO5314</name>
    <name type="ORF">SC6G9.19</name>
</gene>
<proteinExistence type="predicted"/>
<accession>P23159</accession>
<organism>
    <name type="scientific">Streptomyces coelicolor (strain ATCC BAA-471 / A3(2) / M145)</name>
    <dbReference type="NCBI Taxonomy" id="100226"/>
    <lineage>
        <taxon>Bacteria</taxon>
        <taxon>Bacillati</taxon>
        <taxon>Actinomycetota</taxon>
        <taxon>Actinomycetes</taxon>
        <taxon>Kitasatosporales</taxon>
        <taxon>Streptomycetaceae</taxon>
        <taxon>Streptomyces</taxon>
        <taxon>Streptomyces albidoflavus group</taxon>
    </lineage>
</organism>
<dbReference type="EMBL" id="X55942">
    <property type="protein sequence ID" value="CAA39412.1"/>
    <property type="molecule type" value="Genomic_DNA"/>
</dbReference>
<dbReference type="EMBL" id="AL939123">
    <property type="protein sequence ID" value="CAB45610.1"/>
    <property type="molecule type" value="Genomic_DNA"/>
</dbReference>
<dbReference type="PIR" id="S11978">
    <property type="entry name" value="S11978"/>
</dbReference>
<dbReference type="RefSeq" id="NP_629456.1">
    <property type="nucleotide sequence ID" value="NC_003888.3"/>
</dbReference>
<dbReference type="RefSeq" id="WP_011030169.1">
    <property type="nucleotide sequence ID" value="NZ_VNID01000040.1"/>
</dbReference>
<dbReference type="SMR" id="P23159"/>
<dbReference type="STRING" id="100226.gene:17762964"/>
<dbReference type="PaxDb" id="100226-SCO5314"/>
<dbReference type="KEGG" id="sco:SCO5314"/>
<dbReference type="PATRIC" id="fig|100226.15.peg.5400"/>
<dbReference type="eggNOG" id="ENOG50332TT">
    <property type="taxonomic scope" value="Bacteria"/>
</dbReference>
<dbReference type="HOGENOM" id="CLU_2207266_0_0_11"/>
<dbReference type="InParanoid" id="P23159"/>
<dbReference type="OrthoDB" id="4147507at2"/>
<dbReference type="Proteomes" id="UP000001973">
    <property type="component" value="Chromosome"/>
</dbReference>
<dbReference type="GO" id="GO:0030639">
    <property type="term" value="P:polyketide biosynthetic process"/>
    <property type="evidence" value="ECO:0007669"/>
    <property type="project" value="InterPro"/>
</dbReference>
<dbReference type="Gene3D" id="3.30.70.1090">
    <property type="entry name" value="Dimeric alpha+beta barrel"/>
    <property type="match status" value="1"/>
</dbReference>
<dbReference type="InterPro" id="IPR011008">
    <property type="entry name" value="Dimeric_a/b-barrel"/>
</dbReference>
<dbReference type="InterPro" id="IPR006765">
    <property type="entry name" value="Polyketide_synth_cyclase"/>
</dbReference>
<dbReference type="InterPro" id="IPR038474">
    <property type="entry name" value="Polyketide_synth_cyclase_sf"/>
</dbReference>
<dbReference type="Pfam" id="PF04673">
    <property type="entry name" value="Cyclase_polyket"/>
    <property type="match status" value="1"/>
</dbReference>
<dbReference type="SUPFAM" id="SSF54909">
    <property type="entry name" value="Dimeric alpha+beta barrel"/>
    <property type="match status" value="1"/>
</dbReference>